<reference key="1">
    <citation type="journal article" date="2001" name="J. Biol. Chem.">
        <title>Peptidoglycan recognition proteins: a novel family of four human innate immunity pattern recognition molecules.</title>
        <authorList>
            <person name="Liu C."/>
            <person name="Xu Z."/>
            <person name="Gupta D."/>
            <person name="Dziarski R."/>
        </authorList>
    </citation>
    <scope>NUCLEOTIDE SEQUENCE [MRNA] (ISOFORM 1)</scope>
    <scope>TISSUE SPECIFICITY</scope>
</reference>
<reference key="2">
    <citation type="journal article" date="2004" name="Oncogene">
        <title>Expression profiling and differential screening between hepatoblastomas and the corresponding normal livers: identification of high expression of the PLK1 oncogene as a poor-prognostic indicator of hepatoblastomas.</title>
        <authorList>
            <person name="Yamada S."/>
            <person name="Ohira M."/>
            <person name="Horie H."/>
            <person name="Ando K."/>
            <person name="Takayasu H."/>
            <person name="Suzuki Y."/>
            <person name="Sugano S."/>
            <person name="Hirata T."/>
            <person name="Goto T."/>
            <person name="Matsunaga T."/>
            <person name="Hiyama E."/>
            <person name="Hayashi Y."/>
            <person name="Ando H."/>
            <person name="Suita S."/>
            <person name="Kaneko M."/>
            <person name="Sasaki F."/>
            <person name="Hashizume K."/>
            <person name="Ohnuma N."/>
            <person name="Nakagawara A."/>
        </authorList>
    </citation>
    <scope>NUCLEOTIDE SEQUENCE [MRNA]</scope>
    <scope>VARIANT GLN-394</scope>
</reference>
<reference key="3">
    <citation type="journal article" date="2003" name="Genome Res.">
        <title>The secreted protein discovery initiative (SPDI), a large-scale effort to identify novel human secreted and transmembrane proteins: a bioinformatics assessment.</title>
        <authorList>
            <person name="Clark H.F."/>
            <person name="Gurney A.L."/>
            <person name="Abaya E."/>
            <person name="Baker K."/>
            <person name="Baldwin D.T."/>
            <person name="Brush J."/>
            <person name="Chen J."/>
            <person name="Chow B."/>
            <person name="Chui C."/>
            <person name="Crowley C."/>
            <person name="Currell B."/>
            <person name="Deuel B."/>
            <person name="Dowd P."/>
            <person name="Eaton D."/>
            <person name="Foster J.S."/>
            <person name="Grimaldi C."/>
            <person name="Gu Q."/>
            <person name="Hass P.E."/>
            <person name="Heldens S."/>
            <person name="Huang A."/>
            <person name="Kim H.S."/>
            <person name="Klimowski L."/>
            <person name="Jin Y."/>
            <person name="Johnson S."/>
            <person name="Lee J."/>
            <person name="Lewis L."/>
            <person name="Liao D."/>
            <person name="Mark M.R."/>
            <person name="Robbie E."/>
            <person name="Sanchez C."/>
            <person name="Schoenfeld J."/>
            <person name="Seshagiri S."/>
            <person name="Simmons L."/>
            <person name="Singh J."/>
            <person name="Smith V."/>
            <person name="Stinson J."/>
            <person name="Vagts A."/>
            <person name="Vandlen R.L."/>
            <person name="Watanabe C."/>
            <person name="Wieand D."/>
            <person name="Woods K."/>
            <person name="Xie M.-H."/>
            <person name="Yansura D.G."/>
            <person name="Yi S."/>
            <person name="Yu G."/>
            <person name="Yuan J."/>
            <person name="Zhang M."/>
            <person name="Zhang Z."/>
            <person name="Goddard A.D."/>
            <person name="Wood W.I."/>
            <person name="Godowski P.J."/>
            <person name="Gray A.M."/>
        </authorList>
    </citation>
    <scope>NUCLEOTIDE SEQUENCE [LARGE SCALE MRNA] (ISOFORM 1)</scope>
    <scope>VARIANTS ALA-46; GLN-99; LYS-270 AND GLN-394</scope>
</reference>
<reference key="4">
    <citation type="journal article" date="2004" name="Nat. Genet.">
        <title>Complete sequencing and characterization of 21,243 full-length human cDNAs.</title>
        <authorList>
            <person name="Ota T."/>
            <person name="Suzuki Y."/>
            <person name="Nishikawa T."/>
            <person name="Otsuki T."/>
            <person name="Sugiyama T."/>
            <person name="Irie R."/>
            <person name="Wakamatsu A."/>
            <person name="Hayashi K."/>
            <person name="Sato H."/>
            <person name="Nagai K."/>
            <person name="Kimura K."/>
            <person name="Makita H."/>
            <person name="Sekine M."/>
            <person name="Obayashi M."/>
            <person name="Nishi T."/>
            <person name="Shibahara T."/>
            <person name="Tanaka T."/>
            <person name="Ishii S."/>
            <person name="Yamamoto J."/>
            <person name="Saito K."/>
            <person name="Kawai Y."/>
            <person name="Isono Y."/>
            <person name="Nakamura Y."/>
            <person name="Nagahari K."/>
            <person name="Murakami K."/>
            <person name="Yasuda T."/>
            <person name="Iwayanagi T."/>
            <person name="Wagatsuma M."/>
            <person name="Shiratori A."/>
            <person name="Sudo H."/>
            <person name="Hosoiri T."/>
            <person name="Kaku Y."/>
            <person name="Kodaira H."/>
            <person name="Kondo H."/>
            <person name="Sugawara M."/>
            <person name="Takahashi M."/>
            <person name="Kanda K."/>
            <person name="Yokoi T."/>
            <person name="Furuya T."/>
            <person name="Kikkawa E."/>
            <person name="Omura Y."/>
            <person name="Abe K."/>
            <person name="Kamihara K."/>
            <person name="Katsuta N."/>
            <person name="Sato K."/>
            <person name="Tanikawa M."/>
            <person name="Yamazaki M."/>
            <person name="Ninomiya K."/>
            <person name="Ishibashi T."/>
            <person name="Yamashita H."/>
            <person name="Murakawa K."/>
            <person name="Fujimori K."/>
            <person name="Tanai H."/>
            <person name="Kimata M."/>
            <person name="Watanabe M."/>
            <person name="Hiraoka S."/>
            <person name="Chiba Y."/>
            <person name="Ishida S."/>
            <person name="Ono Y."/>
            <person name="Takiguchi S."/>
            <person name="Watanabe S."/>
            <person name="Yosida M."/>
            <person name="Hotuta T."/>
            <person name="Kusano J."/>
            <person name="Kanehori K."/>
            <person name="Takahashi-Fujii A."/>
            <person name="Hara H."/>
            <person name="Tanase T.-O."/>
            <person name="Nomura Y."/>
            <person name="Togiya S."/>
            <person name="Komai F."/>
            <person name="Hara R."/>
            <person name="Takeuchi K."/>
            <person name="Arita M."/>
            <person name="Imose N."/>
            <person name="Musashino K."/>
            <person name="Yuuki H."/>
            <person name="Oshima A."/>
            <person name="Sasaki N."/>
            <person name="Aotsuka S."/>
            <person name="Yoshikawa Y."/>
            <person name="Matsunawa H."/>
            <person name="Ichihara T."/>
            <person name="Shiohata N."/>
            <person name="Sano S."/>
            <person name="Moriya S."/>
            <person name="Momiyama H."/>
            <person name="Satoh N."/>
            <person name="Takami S."/>
            <person name="Terashima Y."/>
            <person name="Suzuki O."/>
            <person name="Nakagawa S."/>
            <person name="Senoh A."/>
            <person name="Mizoguchi H."/>
            <person name="Goto Y."/>
            <person name="Shimizu F."/>
            <person name="Wakebe H."/>
            <person name="Hishigaki H."/>
            <person name="Watanabe T."/>
            <person name="Sugiyama A."/>
            <person name="Takemoto M."/>
            <person name="Kawakami B."/>
            <person name="Yamazaki M."/>
            <person name="Watanabe K."/>
            <person name="Kumagai A."/>
            <person name="Itakura S."/>
            <person name="Fukuzumi Y."/>
            <person name="Fujimori Y."/>
            <person name="Komiyama M."/>
            <person name="Tashiro H."/>
            <person name="Tanigami A."/>
            <person name="Fujiwara T."/>
            <person name="Ono T."/>
            <person name="Yamada K."/>
            <person name="Fujii Y."/>
            <person name="Ozaki K."/>
            <person name="Hirao M."/>
            <person name="Ohmori Y."/>
            <person name="Kawabata A."/>
            <person name="Hikiji T."/>
            <person name="Kobatake N."/>
            <person name="Inagaki H."/>
            <person name="Ikema Y."/>
            <person name="Okamoto S."/>
            <person name="Okitani R."/>
            <person name="Kawakami T."/>
            <person name="Noguchi S."/>
            <person name="Itoh T."/>
            <person name="Shigeta K."/>
            <person name="Senba T."/>
            <person name="Matsumura K."/>
            <person name="Nakajima Y."/>
            <person name="Mizuno T."/>
            <person name="Morinaga M."/>
            <person name="Sasaki M."/>
            <person name="Togashi T."/>
            <person name="Oyama M."/>
            <person name="Hata H."/>
            <person name="Watanabe M."/>
            <person name="Komatsu T."/>
            <person name="Mizushima-Sugano J."/>
            <person name="Satoh T."/>
            <person name="Shirai Y."/>
            <person name="Takahashi Y."/>
            <person name="Nakagawa K."/>
            <person name="Okumura K."/>
            <person name="Nagase T."/>
            <person name="Nomura N."/>
            <person name="Kikuchi H."/>
            <person name="Masuho Y."/>
            <person name="Yamashita R."/>
            <person name="Nakai K."/>
            <person name="Yada T."/>
            <person name="Nakamura Y."/>
            <person name="Ohara O."/>
            <person name="Isogai T."/>
            <person name="Sugano S."/>
        </authorList>
    </citation>
    <scope>NUCLEOTIDE SEQUENCE [LARGE SCALE MRNA] (ISOFORMS 1 AND 2)</scope>
    <source>
        <tissue>Liver</tissue>
        <tissue>Mammary gland</tissue>
        <tissue>Testis</tissue>
    </source>
</reference>
<reference key="5">
    <citation type="submission" date="2005-07" db="EMBL/GenBank/DDBJ databases">
        <authorList>
            <person name="Mural R.J."/>
            <person name="Istrail S."/>
            <person name="Sutton G.G."/>
            <person name="Florea L."/>
            <person name="Halpern A.L."/>
            <person name="Mobarry C.M."/>
            <person name="Lippert R."/>
            <person name="Walenz B."/>
            <person name="Shatkay H."/>
            <person name="Dew I."/>
            <person name="Miller J.R."/>
            <person name="Flanigan M.J."/>
            <person name="Edwards N.J."/>
            <person name="Bolanos R."/>
            <person name="Fasulo D."/>
            <person name="Halldorsson B.V."/>
            <person name="Hannenhalli S."/>
            <person name="Turner R."/>
            <person name="Yooseph S."/>
            <person name="Lu F."/>
            <person name="Nusskern D.R."/>
            <person name="Shue B.C."/>
            <person name="Zheng X.H."/>
            <person name="Zhong F."/>
            <person name="Delcher A.L."/>
            <person name="Huson D.H."/>
            <person name="Kravitz S.A."/>
            <person name="Mouchard L."/>
            <person name="Reinert K."/>
            <person name="Remington K.A."/>
            <person name="Clark A.G."/>
            <person name="Waterman M.S."/>
            <person name="Eichler E.E."/>
            <person name="Adams M.D."/>
            <person name="Hunkapiller M.W."/>
            <person name="Myers E.W."/>
            <person name="Venter J.C."/>
        </authorList>
    </citation>
    <scope>NUCLEOTIDE SEQUENCE [LARGE SCALE GENOMIC DNA]</scope>
</reference>
<reference key="6">
    <citation type="journal article" date="2004" name="Genome Res.">
        <title>The status, quality, and expansion of the NIH full-length cDNA project: the Mammalian Gene Collection (MGC).</title>
        <authorList>
            <consortium name="The MGC Project Team"/>
        </authorList>
    </citation>
    <scope>NUCLEOTIDE SEQUENCE [LARGE SCALE MRNA] (ISOFORM 2)</scope>
</reference>
<reference key="7">
    <citation type="journal article" date="1995" name="Protein Expr. Purif.">
        <title>Characterization of human serum N-acetylmuramyl-L-alanine amidase purified by affinity chromatography.</title>
        <authorList>
            <person name="De Pauw P."/>
            <person name="Neyt C."/>
            <person name="Vanderwinkel E."/>
            <person name="Wattiez R."/>
            <person name="Falmagne P."/>
        </authorList>
    </citation>
    <scope>PROTEIN SEQUENCE OF 22-36</scope>
</reference>
<reference key="8">
    <citation type="journal article" date="2004" name="Protein Sci.">
        <title>Signal peptide prediction based on analysis of experimentally verified cleavage sites.</title>
        <authorList>
            <person name="Zhang Z."/>
            <person name="Henzel W.J."/>
        </authorList>
    </citation>
    <scope>PROTEIN SEQUENCE OF 22-36</scope>
</reference>
<reference key="9">
    <citation type="journal article" date="2005" name="Biochim. Biophys. Acta">
        <title>Identification of serum N-acetylmuramoyl-l-alanine amidase as liver peptidoglycan recognition protein 2.</title>
        <authorList>
            <person name="Zhang Y."/>
            <person name="van der Fits L."/>
            <person name="Voerman J.S."/>
            <person name="Melief M.-J."/>
            <person name="Laman J.D."/>
            <person name="Wang M."/>
            <person name="Wang H."/>
            <person name="Wang M."/>
            <person name="Li X."/>
            <person name="Walls C.D."/>
            <person name="Gupta D."/>
            <person name="Dziarski R."/>
        </authorList>
    </citation>
    <scope>IDENTIFICATION BY MASS SPECTROMETRY</scope>
    <scope>TISSUE SPECIFICITY</scope>
    <scope>PHOSPHORYLATION AT SER-239</scope>
    <scope>DEAMIDATION AT ASN-274 AND ASN-322</scope>
    <scope>DISULFIDE BONDS</scope>
    <source>
        <tissue>Liver</tissue>
        <tissue>Serum</tissue>
    </source>
</reference>
<reference key="10">
    <citation type="journal article" date="2003" name="J. Biol. Chem.">
        <title>Human peptidoglycan recognition protein-L is an N-acetylmuramoyl-L-alanine amidase.</title>
        <authorList>
            <person name="Wang Z.-M."/>
            <person name="Li X."/>
            <person name="Cocklin R.R."/>
            <person name="Wang M."/>
            <person name="Wang M."/>
            <person name="Fukase K."/>
            <person name="Inamura S."/>
            <person name="Kusumoto S."/>
            <person name="Gupta D."/>
            <person name="Dziarski R."/>
        </authorList>
    </citation>
    <scope>FUNCTION</scope>
    <scope>IDENTIFICATION BY MASS SPECTROMETRY</scope>
    <scope>MUTAGENESIS OF HIS-411; CYS-419; HIS-436; TRP-442 AND CYS-530</scope>
</reference>
<reference key="11">
    <citation type="journal article" date="2003" name="Nat. Biotechnol.">
        <title>Identification and quantification of N-linked glycoproteins using hydrazide chemistry, stable isotope labeling and mass spectrometry.</title>
        <authorList>
            <person name="Zhang H."/>
            <person name="Li X.-J."/>
            <person name="Martin D.B."/>
            <person name="Aebersold R."/>
        </authorList>
    </citation>
    <scope>GLYCOSYLATION AT ASN-485</scope>
</reference>
<reference key="12">
    <citation type="journal article" date="2005" name="J. Proteome Res.">
        <title>Human plasma N-glycoproteome analysis by immunoaffinity subtraction, hydrazide chemistry, and mass spectrometry.</title>
        <authorList>
            <person name="Liu T."/>
            <person name="Qian W.-J."/>
            <person name="Gritsenko M.A."/>
            <person name="Camp D.G. II"/>
            <person name="Monroe M.E."/>
            <person name="Moore R.J."/>
            <person name="Smith R.D."/>
        </authorList>
    </citation>
    <scope>GLYCOSYLATION [LARGE SCALE ANALYSIS] AT ASN-77; ASN-367 AND ASN-485</scope>
    <source>
        <tissue>Plasma</tissue>
    </source>
</reference>
<reference key="13">
    <citation type="journal article" date="2009" name="J. Proteome Res.">
        <title>Glycoproteomics analysis of human liver tissue by combination of multiple enzyme digestion and hydrazide chemistry.</title>
        <authorList>
            <person name="Chen R."/>
            <person name="Jiang X."/>
            <person name="Sun D."/>
            <person name="Han G."/>
            <person name="Wang F."/>
            <person name="Ye M."/>
            <person name="Wang L."/>
            <person name="Zou H."/>
        </authorList>
    </citation>
    <scope>GLYCOSYLATION [LARGE SCALE ANALYSIS] AT ASN-367 AND ASN-485</scope>
    <source>
        <tissue>Liver</tissue>
    </source>
</reference>
<gene>
    <name type="primary">PGLYRP2</name>
    <name type="synonym">PGLYRPL</name>
    <name type="synonym">PGRPL</name>
    <name type="ORF">UNQ3103/PRO10102</name>
</gene>
<dbReference type="EC" id="3.5.1.28"/>
<dbReference type="EMBL" id="AF384856">
    <property type="protein sequence ID" value="AAL05629.1"/>
    <property type="molecule type" value="mRNA"/>
</dbReference>
<dbReference type="EMBL" id="AB073610">
    <property type="protein sequence ID" value="BAD38647.1"/>
    <property type="molecule type" value="mRNA"/>
</dbReference>
<dbReference type="EMBL" id="AY358156">
    <property type="protein sequence ID" value="AAQ88523.1"/>
    <property type="molecule type" value="mRNA"/>
</dbReference>
<dbReference type="EMBL" id="AK055882">
    <property type="protein sequence ID" value="BAB71034.1"/>
    <property type="molecule type" value="mRNA"/>
</dbReference>
<dbReference type="EMBL" id="AK289415">
    <property type="protein sequence ID" value="BAF82104.1"/>
    <property type="molecule type" value="mRNA"/>
</dbReference>
<dbReference type="EMBL" id="AK292292">
    <property type="protein sequence ID" value="BAF84981.1"/>
    <property type="molecule type" value="mRNA"/>
</dbReference>
<dbReference type="EMBL" id="CH471106">
    <property type="protein sequence ID" value="EAW84482.1"/>
    <property type="molecule type" value="Genomic_DNA"/>
</dbReference>
<dbReference type="EMBL" id="CH471106">
    <property type="protein sequence ID" value="EAW84483.1"/>
    <property type="molecule type" value="Genomic_DNA"/>
</dbReference>
<dbReference type="EMBL" id="BC136551">
    <property type="protein sequence ID" value="AAI36552.1"/>
    <property type="molecule type" value="mRNA"/>
</dbReference>
<dbReference type="EMBL" id="BC136552">
    <property type="protein sequence ID" value="AAI36553.1"/>
    <property type="molecule type" value="mRNA"/>
</dbReference>
<dbReference type="EMBL" id="BC144238">
    <property type="protein sequence ID" value="AAI44239.1"/>
    <property type="molecule type" value="mRNA"/>
</dbReference>
<dbReference type="CCDS" id="CCDS12330.2">
    <molecule id="Q96PD5-1"/>
</dbReference>
<dbReference type="CCDS" id="CCDS86718.1">
    <molecule id="Q96PD5-2"/>
</dbReference>
<dbReference type="RefSeq" id="NP_001350475.1">
    <molecule id="Q96PD5-2"/>
    <property type="nucleotide sequence ID" value="NM_001363546.1"/>
</dbReference>
<dbReference type="RefSeq" id="NP_443122.3">
    <molecule id="Q96PD5-1"/>
    <property type="nucleotide sequence ID" value="NM_052890.3"/>
</dbReference>
<dbReference type="RefSeq" id="XP_006722696.1">
    <property type="nucleotide sequence ID" value="XM_006722633.3"/>
</dbReference>
<dbReference type="SMR" id="Q96PD5"/>
<dbReference type="BioGRID" id="125340">
    <property type="interactions" value="2"/>
</dbReference>
<dbReference type="FunCoup" id="Q96PD5">
    <property type="interactions" value="64"/>
</dbReference>
<dbReference type="IntAct" id="Q96PD5">
    <property type="interactions" value="3"/>
</dbReference>
<dbReference type="STRING" id="9606.ENSP00000292609"/>
<dbReference type="DrugBank" id="DB09130">
    <property type="generic name" value="Copper"/>
</dbReference>
<dbReference type="DrugBank" id="DB01593">
    <property type="generic name" value="Zinc"/>
</dbReference>
<dbReference type="DrugBank" id="DB14487">
    <property type="generic name" value="Zinc acetate"/>
</dbReference>
<dbReference type="DrugBank" id="DB14533">
    <property type="generic name" value="Zinc chloride"/>
</dbReference>
<dbReference type="DrugBank" id="DB14548">
    <property type="generic name" value="Zinc sulfate, unspecified form"/>
</dbReference>
<dbReference type="GlyConnect" id="784">
    <property type="glycosylation" value="8 N-Linked glycans (3 sites), 1 O-Linked glycan (1 site)"/>
</dbReference>
<dbReference type="GlyCosmos" id="Q96PD5">
    <property type="glycosylation" value="10 sites, 12 glycans"/>
</dbReference>
<dbReference type="GlyGen" id="Q96PD5">
    <property type="glycosylation" value="12 sites, 50 N-linked glycans (3 sites), 6 O-linked glycans (9 sites)"/>
</dbReference>
<dbReference type="iPTMnet" id="Q96PD5"/>
<dbReference type="PhosphoSitePlus" id="Q96PD5"/>
<dbReference type="BioMuta" id="PGLYRP2"/>
<dbReference type="DMDM" id="38258222"/>
<dbReference type="MassIVE" id="Q96PD5"/>
<dbReference type="PaxDb" id="9606-ENSP00000345968"/>
<dbReference type="PeptideAtlas" id="Q96PD5"/>
<dbReference type="ProteomicsDB" id="77669">
    <molecule id="Q96PD5-1"/>
</dbReference>
<dbReference type="ProteomicsDB" id="77670">
    <molecule id="Q96PD5-2"/>
</dbReference>
<dbReference type="Antibodypedia" id="43600">
    <property type="antibodies" value="97 antibodies from 23 providers"/>
</dbReference>
<dbReference type="DNASU" id="114770"/>
<dbReference type="Ensembl" id="ENST00000292609.8">
    <molecule id="Q96PD5-2"/>
    <property type="protein sequence ID" value="ENSP00000292609.3"/>
    <property type="gene ID" value="ENSG00000161031.13"/>
</dbReference>
<dbReference type="Ensembl" id="ENST00000340880.5">
    <molecule id="Q96PD5-1"/>
    <property type="protein sequence ID" value="ENSP00000345968.4"/>
    <property type="gene ID" value="ENSG00000161031.13"/>
</dbReference>
<dbReference type="GeneID" id="114770"/>
<dbReference type="KEGG" id="hsa:114770"/>
<dbReference type="MANE-Select" id="ENST00000340880.5">
    <property type="protein sequence ID" value="ENSP00000345968.4"/>
    <property type="RefSeq nucleotide sequence ID" value="NM_052890.4"/>
    <property type="RefSeq protein sequence ID" value="NP_443122.3"/>
</dbReference>
<dbReference type="UCSC" id="uc002nbf.5">
    <molecule id="Q96PD5-1"/>
    <property type="organism name" value="human"/>
</dbReference>
<dbReference type="AGR" id="HGNC:30013"/>
<dbReference type="CTD" id="114770"/>
<dbReference type="DisGeNET" id="114770"/>
<dbReference type="GeneCards" id="PGLYRP2"/>
<dbReference type="HGNC" id="HGNC:30013">
    <property type="gene designation" value="PGLYRP2"/>
</dbReference>
<dbReference type="HPA" id="ENSG00000161031">
    <property type="expression patterns" value="Tissue enriched (liver)"/>
</dbReference>
<dbReference type="MIM" id="608199">
    <property type="type" value="gene"/>
</dbReference>
<dbReference type="neXtProt" id="NX_Q96PD5"/>
<dbReference type="OpenTargets" id="ENSG00000161031"/>
<dbReference type="PharmGKB" id="PA134929965"/>
<dbReference type="VEuPathDB" id="HostDB:ENSG00000161031"/>
<dbReference type="eggNOG" id="ENOG502QR3D">
    <property type="taxonomic scope" value="Eukaryota"/>
</dbReference>
<dbReference type="GeneTree" id="ENSGT00940000158718"/>
<dbReference type="HOGENOM" id="CLU_038892_0_0_1"/>
<dbReference type="InParanoid" id="Q96PD5"/>
<dbReference type="OMA" id="MDCPPII"/>
<dbReference type="OrthoDB" id="10001926at2759"/>
<dbReference type="PAN-GO" id="Q96PD5">
    <property type="GO annotations" value="4 GO annotations based on evolutionary models"/>
</dbReference>
<dbReference type="PhylomeDB" id="Q96PD5"/>
<dbReference type="TreeFam" id="TF323898"/>
<dbReference type="BRENDA" id="3.5.1.28">
    <property type="organism ID" value="2681"/>
</dbReference>
<dbReference type="PathwayCommons" id="Q96PD5"/>
<dbReference type="Reactome" id="R-HSA-6803157">
    <property type="pathway name" value="Antimicrobial peptides"/>
</dbReference>
<dbReference type="SignaLink" id="Q96PD5"/>
<dbReference type="BioGRID-ORCS" id="114770">
    <property type="hits" value="12 hits in 1143 CRISPR screens"/>
</dbReference>
<dbReference type="ChiTaRS" id="PGLYRP2">
    <property type="organism name" value="human"/>
</dbReference>
<dbReference type="GeneWiki" id="PGLYRP2"/>
<dbReference type="GenomeRNAi" id="114770"/>
<dbReference type="Pharos" id="Q96PD5">
    <property type="development level" value="Tbio"/>
</dbReference>
<dbReference type="PRO" id="PR:Q96PD5"/>
<dbReference type="Proteomes" id="UP000005640">
    <property type="component" value="Chromosome 19"/>
</dbReference>
<dbReference type="RNAct" id="Q96PD5">
    <property type="molecule type" value="protein"/>
</dbReference>
<dbReference type="Bgee" id="ENSG00000161031">
    <property type="expression patterns" value="Expressed in right lobe of liver and 42 other cell types or tissues"/>
</dbReference>
<dbReference type="ExpressionAtlas" id="Q96PD5">
    <property type="expression patterns" value="baseline and differential"/>
</dbReference>
<dbReference type="GO" id="GO:0070062">
    <property type="term" value="C:extracellular exosome"/>
    <property type="evidence" value="ECO:0007005"/>
    <property type="project" value="UniProtKB"/>
</dbReference>
<dbReference type="GO" id="GO:0005576">
    <property type="term" value="C:extracellular region"/>
    <property type="evidence" value="ECO:0000304"/>
    <property type="project" value="Reactome"/>
</dbReference>
<dbReference type="GO" id="GO:0016020">
    <property type="term" value="C:membrane"/>
    <property type="evidence" value="ECO:0000303"/>
    <property type="project" value="UniProtKB"/>
</dbReference>
<dbReference type="GO" id="GO:0008745">
    <property type="term" value="F:N-acetylmuramoyl-L-alanine amidase activity"/>
    <property type="evidence" value="ECO:0000314"/>
    <property type="project" value="CACAO"/>
</dbReference>
<dbReference type="GO" id="GO:0042834">
    <property type="term" value="F:peptidoglycan binding"/>
    <property type="evidence" value="ECO:0000314"/>
    <property type="project" value="UniProtKB"/>
</dbReference>
<dbReference type="GO" id="GO:0016019">
    <property type="term" value="F:peptidoglycan immune receptor activity"/>
    <property type="evidence" value="ECO:0000314"/>
    <property type="project" value="UniProtKB"/>
</dbReference>
<dbReference type="GO" id="GO:0008270">
    <property type="term" value="F:zinc ion binding"/>
    <property type="evidence" value="ECO:0007669"/>
    <property type="project" value="InterPro"/>
</dbReference>
<dbReference type="GO" id="GO:0051701">
    <property type="term" value="P:biological process involved in interaction with host"/>
    <property type="evidence" value="ECO:0007669"/>
    <property type="project" value="Ensembl"/>
</dbReference>
<dbReference type="GO" id="GO:0042742">
    <property type="term" value="P:defense response to bacterium"/>
    <property type="evidence" value="ECO:0000318"/>
    <property type="project" value="GO_Central"/>
</dbReference>
<dbReference type="GO" id="GO:0050830">
    <property type="term" value="P:defense response to Gram-positive bacterium"/>
    <property type="evidence" value="ECO:0000314"/>
    <property type="project" value="UniProtKB"/>
</dbReference>
<dbReference type="GO" id="GO:0016045">
    <property type="term" value="P:detection of bacterium"/>
    <property type="evidence" value="ECO:0000314"/>
    <property type="project" value="UniProtKB"/>
</dbReference>
<dbReference type="GO" id="GO:0006955">
    <property type="term" value="P:immune response"/>
    <property type="evidence" value="ECO:0000318"/>
    <property type="project" value="GO_Central"/>
</dbReference>
<dbReference type="GO" id="GO:0045087">
    <property type="term" value="P:innate immune response"/>
    <property type="evidence" value="ECO:0000303"/>
    <property type="project" value="UniProtKB"/>
</dbReference>
<dbReference type="GO" id="GO:0032827">
    <property type="term" value="P:negative regulation of natural killer cell differentiation involved in immune response"/>
    <property type="evidence" value="ECO:0007669"/>
    <property type="project" value="Ensembl"/>
</dbReference>
<dbReference type="GO" id="GO:0032689">
    <property type="term" value="P:negative regulation of type II interferon production"/>
    <property type="evidence" value="ECO:0007669"/>
    <property type="project" value="Ensembl"/>
</dbReference>
<dbReference type="GO" id="GO:0001519">
    <property type="term" value="P:peptide amidation"/>
    <property type="evidence" value="ECO:0000303"/>
    <property type="project" value="UniProtKB"/>
</dbReference>
<dbReference type="GO" id="GO:0009253">
    <property type="term" value="P:peptidoglycan catabolic process"/>
    <property type="evidence" value="ECO:0007669"/>
    <property type="project" value="InterPro"/>
</dbReference>
<dbReference type="GO" id="GO:0050727">
    <property type="term" value="P:regulation of inflammatory response"/>
    <property type="evidence" value="ECO:0007669"/>
    <property type="project" value="Ensembl"/>
</dbReference>
<dbReference type="CDD" id="cd06583">
    <property type="entry name" value="PGRP"/>
    <property type="match status" value="1"/>
</dbReference>
<dbReference type="FunFam" id="3.40.80.10:FF:000001">
    <property type="entry name" value="Peptidoglycan recognition protein 1"/>
    <property type="match status" value="1"/>
</dbReference>
<dbReference type="Gene3D" id="3.40.80.10">
    <property type="entry name" value="Peptidoglycan recognition protein-like"/>
    <property type="match status" value="1"/>
</dbReference>
<dbReference type="InterPro" id="IPR036505">
    <property type="entry name" value="Amidase/PGRP_sf"/>
</dbReference>
<dbReference type="InterPro" id="IPR002502">
    <property type="entry name" value="Amidase_domain"/>
</dbReference>
<dbReference type="InterPro" id="IPR015510">
    <property type="entry name" value="PGRP"/>
</dbReference>
<dbReference type="InterPro" id="IPR006619">
    <property type="entry name" value="PGRP_domain_met/bac"/>
</dbReference>
<dbReference type="PANTHER" id="PTHR11022:SF66">
    <property type="entry name" value="N-ACETYLMURAMOYL-L-ALANINE AMIDASE"/>
    <property type="match status" value="1"/>
</dbReference>
<dbReference type="PANTHER" id="PTHR11022">
    <property type="entry name" value="PEPTIDOGLYCAN RECOGNITION PROTEIN"/>
    <property type="match status" value="1"/>
</dbReference>
<dbReference type="Pfam" id="PF01510">
    <property type="entry name" value="Amidase_2"/>
    <property type="match status" value="1"/>
</dbReference>
<dbReference type="SMART" id="SM00644">
    <property type="entry name" value="Ami_2"/>
    <property type="match status" value="1"/>
</dbReference>
<dbReference type="SMART" id="SM00701">
    <property type="entry name" value="PGRP"/>
    <property type="match status" value="1"/>
</dbReference>
<dbReference type="SUPFAM" id="SSF55846">
    <property type="entry name" value="N-acetylmuramoyl-L-alanine amidase-like"/>
    <property type="match status" value="1"/>
</dbReference>
<sequence length="576" mass="62217">MAQGVLWILLGLLLWSDPGTASLPLLMDSVIQALAELEQKVPAAKTRHTASAWLMSAPNSGPHNRLYHFLLGAWSLNATELDPCPLSPELLGLTKEVARHDVREGKEYGVVLAPDGSTVAVEPLLAGLEAGLQGRRVINLPLDSMAAPWETGDTFPDVVAIAPDVRATSSPGLRDGSPDVTTADIGANTPDATKGCPDVQASLPDAKAKSPPTMVDSLLAVTLAGNLGLTFLRGSQTQSHPDLGTEGCWDQLSAPRTFTLLDPKASLLTMAFLNGALDGVILGDYLSRTPEPRPSLSHLLSQYYGAGVARDPGFRSNFRRQNGAALTSASILAQQVWGTLVLLQRLEPVHLQLQCMSQEQLAQVAANATKEFTEAFLGCPAIHPRCRWGAAPYRGRPKLLQLPLGFLYVHHTYVPAPPCTDFTRCAANMRSMQRYHQDTQGWGDIGYSFVVGSDGYVYEGRGWHWVGAHTLGHNSRGFGVAIVGNYTAALPTEAALRTVRDTLPSCAVRAGLLRPDYALLGHRQLVRTDCPGDALFDLLRTWPHFTATVKPRPARSVSKRSRREPPPRTLPATDLQ</sequence>
<feature type="signal peptide" evidence="10 14">
    <location>
        <begin position="1"/>
        <end position="21"/>
    </location>
</feature>
<feature type="chain" id="PRO_0000023920" description="N-acetylmuramoyl-L-alanine amidase">
    <location>
        <begin position="22"/>
        <end position="576"/>
    </location>
</feature>
<feature type="domain" description="N-acetylmuramoyl-L-alanine amidase" evidence="3">
    <location>
        <begin position="406"/>
        <end position="532"/>
    </location>
</feature>
<feature type="region of interest" description="Disordered" evidence="4">
    <location>
        <begin position="550"/>
        <end position="576"/>
    </location>
</feature>
<feature type="binding site" evidence="2">
    <location>
        <position position="410"/>
    </location>
    <ligand>
        <name>Zn(2+)</name>
        <dbReference type="ChEBI" id="CHEBI:29105"/>
    </ligand>
</feature>
<feature type="binding site" evidence="2">
    <location>
        <position position="522"/>
    </location>
    <ligand>
        <name>Zn(2+)</name>
        <dbReference type="ChEBI" id="CHEBI:29105"/>
    </ligand>
</feature>
<feature type="binding site" evidence="2">
    <location>
        <position position="530"/>
    </location>
    <ligand>
        <name>Zn(2+)</name>
        <dbReference type="ChEBI" id="CHEBI:29105"/>
    </ligand>
</feature>
<feature type="site" description="Important for catalytic activity; essential for amidase activity and zinc hydrate coordination" evidence="1">
    <location>
        <position position="447"/>
    </location>
</feature>
<feature type="modified residue" description="Phosphoserine" evidence="11">
    <location>
        <position position="239"/>
    </location>
</feature>
<feature type="modified residue" description="Deamidated asparagine" evidence="11">
    <location>
        <position position="274"/>
    </location>
</feature>
<feature type="modified residue" description="Deamidated asparagine" evidence="11">
    <location>
        <position position="322"/>
    </location>
</feature>
<feature type="glycosylation site" description="N-linked (GlcNAc...) asparagine" evidence="12">
    <location>
        <position position="77"/>
    </location>
</feature>
<feature type="glycosylation site" description="N-linked (GlcNAc...) asparagine" evidence="12 13">
    <location>
        <position position="367"/>
    </location>
</feature>
<feature type="glycosylation site" description="N-linked (GlcNAc...) asparagine" evidence="6 12 13">
    <location>
        <position position="485"/>
    </location>
</feature>
<feature type="disulfide bond" evidence="11">
    <location>
        <begin position="419"/>
        <end position="425"/>
    </location>
</feature>
<feature type="splice variant" id="VSP_008964" description="In isoform 2." evidence="15 16">
    <original>TVKPRPARSVSKRSRREPPPRTLPATDLQ</original>
    <variation>VSLRSLHYTARRPSVYTSSTRPLPPACNSCARTASARPPTSRRHVYSGNLGPAFAGHSAGNIPDPVTSAYAASAQPQTQPACPFPSS</variation>
    <location>
        <begin position="548"/>
        <end position="576"/>
    </location>
</feature>
<feature type="sequence variant" id="VAR_050498" description="In dbSNP:rs3813135." evidence="7">
    <original>T</original>
    <variation>A</variation>
    <location>
        <position position="46"/>
    </location>
</feature>
<feature type="sequence variant" id="VAR_050499" description="In dbSNP:rs733731." evidence="7">
    <original>R</original>
    <variation>Q</variation>
    <location>
        <position position="99"/>
    </location>
</feature>
<feature type="sequence variant" id="VAR_050500" description="In dbSNP:rs28404490.">
    <original>T</original>
    <variation>N</variation>
    <location>
        <position position="257"/>
    </location>
</feature>
<feature type="sequence variant" id="VAR_050501" description="In dbSNP:rs892145." evidence="7">
    <original>M</original>
    <variation>K</variation>
    <location>
        <position position="270"/>
    </location>
</feature>
<feature type="sequence variant" id="VAR_055231" description="In dbSNP:rs34440547." evidence="7 9">
    <original>R</original>
    <variation>Q</variation>
    <location>
        <position position="394"/>
    </location>
</feature>
<feature type="sequence variant" id="VAR_050502" description="In dbSNP:rs2304200.">
    <original>R</original>
    <variation>W</variation>
    <location>
        <position position="476"/>
    </location>
</feature>
<feature type="mutagenesis site" description="No effect on amidase activity." evidence="8">
    <original>H</original>
    <variation>A</variation>
    <location>
        <position position="411"/>
    </location>
</feature>
<feature type="mutagenesis site" description="Abolishes amidase activity." evidence="8">
    <original>C</original>
    <variation>A</variation>
    <location>
        <position position="419"/>
    </location>
</feature>
<feature type="mutagenesis site" description="No effect on amidase activity." evidence="8">
    <original>H</original>
    <variation>A</variation>
    <location>
        <position position="436"/>
    </location>
</feature>
<feature type="mutagenesis site" description="Reduced amidase activity." evidence="8">
    <original>W</original>
    <variation>A</variation>
    <location>
        <position position="442"/>
    </location>
</feature>
<feature type="mutagenesis site" description="Abolishes amidase activity.">
    <original>Y</original>
    <variation>A</variation>
    <location>
        <position position="447"/>
    </location>
</feature>
<feature type="mutagenesis site" description="Abolishes amidase activity." evidence="8">
    <original>C</original>
    <variation>S</variation>
    <location>
        <position position="530"/>
    </location>
</feature>
<feature type="sequence conflict" description="In Ref. 6; AAI44239." evidence="17" ref="6">
    <original>L</original>
    <variation>P</variation>
    <location>
        <position position="124"/>
    </location>
</feature>
<feature type="sequence conflict" description="In Ref. 4; BAB71034." evidence="17" ref="4">
    <original>S</original>
    <variation>G</variation>
    <location>
        <position position="448"/>
    </location>
</feature>
<feature type="sequence conflict" description="In Ref. 4; BAF82104." evidence="17" ref="4">
    <original>R</original>
    <variation>G</variation>
    <location>
        <position position="562"/>
    </location>
</feature>
<accession>Q96PD5</accession>
<accession>A8K050</accession>
<accession>A8K8C7</accession>
<accession>B2RMZ2</accession>
<accession>B7ZM33</accession>
<accession>Q68CK1</accession>
<accession>Q96N74</accession>
<accession>Q9UC60</accession>
<proteinExistence type="evidence at protein level"/>
<protein>
    <recommendedName>
        <fullName>N-acetylmuramoyl-L-alanine amidase</fullName>
        <ecNumber>3.5.1.28</ecNumber>
    </recommendedName>
    <alternativeName>
        <fullName>Peptidoglycan recognition protein 2</fullName>
    </alternativeName>
    <alternativeName>
        <fullName>Peptidoglycan recognition protein long</fullName>
        <shortName>PGRP-L</shortName>
    </alternativeName>
</protein>
<comment type="function">
    <text evidence="8">May play a scavenger role by digesting biologically active peptidoglycan (PGN) into biologically inactive fragments. Has no direct bacteriolytic activity.</text>
</comment>
<comment type="catalytic activity">
    <reaction>
        <text>Hydrolyzes the link between N-acetylmuramoyl residues and L-amino acid residues in certain cell-wall glycopeptides.</text>
        <dbReference type="EC" id="3.5.1.28"/>
    </reaction>
</comment>
<comment type="cofactor">
    <cofactor evidence="1">
        <name>Zn(2+)</name>
        <dbReference type="ChEBI" id="CHEBI:29105"/>
    </cofactor>
</comment>
<comment type="interaction">
    <interactant intactId="EBI-12758027">
        <id>Q96PD5-2</id>
    </interactant>
    <interactant intactId="EBI-347996">
        <id>O43765</id>
        <label>SGTA</label>
    </interactant>
    <organismsDiffer>false</organismsDiffer>
    <experiments>3</experiments>
</comment>
<comment type="subcellular location">
    <subcellularLocation>
        <location>Secreted</location>
    </subcellularLocation>
    <subcellularLocation>
        <location>Membrane</location>
    </subcellularLocation>
</comment>
<comment type="alternative products">
    <event type="alternative splicing"/>
    <isoform>
        <id>Q96PD5-1</id>
        <name>1</name>
        <sequence type="displayed"/>
    </isoform>
    <isoform>
        <id>Q96PD5-2</id>
        <name>2</name>
        <sequence type="described" ref="VSP_008964"/>
    </isoform>
</comment>
<comment type="tissue specificity">
    <text evidence="5 11">Strongly expressed in liver and fetal liver, and secreted into serum. Expressed to a much lesser extent in transverse colon, lymph nodes, heart, thymus, pancreas, descending colon, stomach and testis. Isoform 2 is not detected in the liver or serum.</text>
</comment>
<comment type="miscellaneous">
    <molecule>Isoform 1</molecule>
    <text>Major isoform.</text>
</comment>
<comment type="miscellaneous">
    <molecule>Isoform 2</molecule>
    <text evidence="17">May be due to an intron retention.</text>
</comment>
<comment type="similarity">
    <text evidence="17">Belongs to the N-acetylmuramoyl-L-alanine amidase 2 family.</text>
</comment>
<evidence type="ECO:0000250" key="1">
    <source>
        <dbReference type="UniProtKB" id="P00806"/>
    </source>
</evidence>
<evidence type="ECO:0000250" key="2">
    <source>
        <dbReference type="UniProtKB" id="Q8INK6"/>
    </source>
</evidence>
<evidence type="ECO:0000255" key="3"/>
<evidence type="ECO:0000256" key="4">
    <source>
        <dbReference type="SAM" id="MobiDB-lite"/>
    </source>
</evidence>
<evidence type="ECO:0000269" key="5">
    <source>
    </source>
</evidence>
<evidence type="ECO:0000269" key="6">
    <source>
    </source>
</evidence>
<evidence type="ECO:0000269" key="7">
    <source>
    </source>
</evidence>
<evidence type="ECO:0000269" key="8">
    <source>
    </source>
</evidence>
<evidence type="ECO:0000269" key="9">
    <source>
    </source>
</evidence>
<evidence type="ECO:0000269" key="10">
    <source>
    </source>
</evidence>
<evidence type="ECO:0000269" key="11">
    <source>
    </source>
</evidence>
<evidence type="ECO:0000269" key="12">
    <source>
    </source>
</evidence>
<evidence type="ECO:0000269" key="13">
    <source>
    </source>
</evidence>
<evidence type="ECO:0000269" key="14">
    <source>
    </source>
</evidence>
<evidence type="ECO:0000303" key="15">
    <source>
    </source>
</evidence>
<evidence type="ECO:0000303" key="16">
    <source>
    </source>
</evidence>
<evidence type="ECO:0000305" key="17"/>
<name>PGRP2_HUMAN</name>
<organism>
    <name type="scientific">Homo sapiens</name>
    <name type="common">Human</name>
    <dbReference type="NCBI Taxonomy" id="9606"/>
    <lineage>
        <taxon>Eukaryota</taxon>
        <taxon>Metazoa</taxon>
        <taxon>Chordata</taxon>
        <taxon>Craniata</taxon>
        <taxon>Vertebrata</taxon>
        <taxon>Euteleostomi</taxon>
        <taxon>Mammalia</taxon>
        <taxon>Eutheria</taxon>
        <taxon>Euarchontoglires</taxon>
        <taxon>Primates</taxon>
        <taxon>Haplorrhini</taxon>
        <taxon>Catarrhini</taxon>
        <taxon>Hominidae</taxon>
        <taxon>Homo</taxon>
    </lineage>
</organism>
<keyword id="KW-0025">Alternative splicing</keyword>
<keyword id="KW-0903">Direct protein sequencing</keyword>
<keyword id="KW-1015">Disulfide bond</keyword>
<keyword id="KW-0325">Glycoprotein</keyword>
<keyword id="KW-0378">Hydrolase</keyword>
<keyword id="KW-0391">Immunity</keyword>
<keyword id="KW-0472">Membrane</keyword>
<keyword id="KW-0479">Metal-binding</keyword>
<keyword id="KW-0597">Phosphoprotein</keyword>
<keyword id="KW-1267">Proteomics identification</keyword>
<keyword id="KW-1185">Reference proteome</keyword>
<keyword id="KW-0964">Secreted</keyword>
<keyword id="KW-0732">Signal</keyword>
<keyword id="KW-0862">Zinc</keyword>